<name>SSU72_GIBZE</name>
<gene>
    <name type="primary">SSU72</name>
    <name type="ORF">FGRRES_00930</name>
    <name type="ORF">FGSG_00930</name>
</gene>
<accession>Q4IPC8</accession>
<accession>A0A0E0RNZ9</accession>
<accession>V6QVB7</accession>
<dbReference type="EC" id="3.1.3.16"/>
<dbReference type="EMBL" id="DS231663">
    <property type="protein sequence ID" value="ESU06186.1"/>
    <property type="molecule type" value="Genomic_DNA"/>
</dbReference>
<dbReference type="EMBL" id="HG970332">
    <property type="protein sequence ID" value="CEF72974.1"/>
    <property type="molecule type" value="Genomic_DNA"/>
</dbReference>
<dbReference type="RefSeq" id="XP_011316671.1">
    <property type="nucleotide sequence ID" value="XM_011318369.1"/>
</dbReference>
<dbReference type="SMR" id="Q4IPC8"/>
<dbReference type="FunCoup" id="Q4IPC8">
    <property type="interactions" value="951"/>
</dbReference>
<dbReference type="STRING" id="229533.Q4IPC8"/>
<dbReference type="GeneID" id="23548396"/>
<dbReference type="KEGG" id="fgr:FGSG_00930"/>
<dbReference type="VEuPathDB" id="FungiDB:FGRAMPH1_01G02345"/>
<dbReference type="eggNOG" id="KOG2424">
    <property type="taxonomic scope" value="Eukaryota"/>
</dbReference>
<dbReference type="HOGENOM" id="CLU_062463_0_0_1"/>
<dbReference type="InParanoid" id="Q4IPC8"/>
<dbReference type="OrthoDB" id="41581at110618"/>
<dbReference type="PHI-base" id="PHI:1531"/>
<dbReference type="PHI-base" id="PHI:5700"/>
<dbReference type="Proteomes" id="UP000070720">
    <property type="component" value="Chromosome 1"/>
</dbReference>
<dbReference type="GO" id="GO:0005634">
    <property type="term" value="C:nucleus"/>
    <property type="evidence" value="ECO:0007669"/>
    <property type="project" value="UniProtKB-SubCell"/>
</dbReference>
<dbReference type="GO" id="GO:0004722">
    <property type="term" value="F:protein serine/threonine phosphatase activity"/>
    <property type="evidence" value="ECO:0007669"/>
    <property type="project" value="UniProtKB-EC"/>
</dbReference>
<dbReference type="GO" id="GO:0006397">
    <property type="term" value="P:mRNA processing"/>
    <property type="evidence" value="ECO:0007669"/>
    <property type="project" value="UniProtKB-KW"/>
</dbReference>
<dbReference type="FunFam" id="3.40.50.2300:FF:000039">
    <property type="entry name" value="RNA polymerase II subunit A C-terminal domain phosphatase"/>
    <property type="match status" value="1"/>
</dbReference>
<dbReference type="FunFam" id="3.40.50.2300:FF:000189">
    <property type="entry name" value="SSU72p Phosphatase and transcription/RNA-processing factor"/>
    <property type="match status" value="1"/>
</dbReference>
<dbReference type="Gene3D" id="3.40.50.2300">
    <property type="match status" value="2"/>
</dbReference>
<dbReference type="InterPro" id="IPR006811">
    <property type="entry name" value="RNA_pol_II_suA"/>
</dbReference>
<dbReference type="PANTHER" id="PTHR20383">
    <property type="entry name" value="RNA POLYMERASE II SUBUNIT A C-TERMINAL DOMAIN PHOSPHATASE"/>
    <property type="match status" value="1"/>
</dbReference>
<dbReference type="Pfam" id="PF04722">
    <property type="entry name" value="Ssu72"/>
    <property type="match status" value="1"/>
</dbReference>
<sequence>MEVANGSSAAQGQNGSSEGSNGYKLKFCTVCASNNNRSMEAHLRLSQADYPVISFGTGSLVRLPGPTITQPNVYHFNKTSYDSMFKELESKDARLYKNNGILNMLNRNRGVKWGPERWQDWQVGVPRLQHAKDRGSEGTEGGLVDIVITCEERCWDAVVDDLMNRGSPLNRPVHVINVEIKDNHEEAAVGGQGILDLANSLNAAAREERDAVGASAFDNGSASSRATFDERVPDILASWQERWPNLPATWTVAWF</sequence>
<evidence type="ECO:0000250" key="1"/>
<evidence type="ECO:0000305" key="2"/>
<protein>
    <recommendedName>
        <fullName>RNA polymerase II subunit A C-terminal domain phosphatase SSU72</fullName>
        <shortName>CTD phosphatase SSU72</shortName>
        <ecNumber>3.1.3.16</ecNumber>
    </recommendedName>
    <alternativeName>
        <fullName>Suppressor of SUA7 protein 2 homolog</fullName>
    </alternativeName>
</protein>
<proteinExistence type="inferred from homology"/>
<comment type="function">
    <text evidence="1">Processively dephosphorylates Ser-5 of the heptad repeats YSPTSPS in the C-terminal domain of the largest RNA polymerase II subunit (RPB1).</text>
</comment>
<comment type="function">
    <text evidence="1">Component of the cleavage and polyadenylation factor (CPF) complex, which plays a key role in polyadenylation-dependent pre-mRNA 3'-end formation and cooperates with cleavage factors including the CFIA complex and NAB4/CFIB. SSU72 is required for 3'-end formation of snoRNAs (By similarity).</text>
</comment>
<comment type="catalytic activity">
    <reaction>
        <text>O-phospho-L-seryl-[protein] + H2O = L-seryl-[protein] + phosphate</text>
        <dbReference type="Rhea" id="RHEA:20629"/>
        <dbReference type="Rhea" id="RHEA-COMP:9863"/>
        <dbReference type="Rhea" id="RHEA-COMP:11604"/>
        <dbReference type="ChEBI" id="CHEBI:15377"/>
        <dbReference type="ChEBI" id="CHEBI:29999"/>
        <dbReference type="ChEBI" id="CHEBI:43474"/>
        <dbReference type="ChEBI" id="CHEBI:83421"/>
        <dbReference type="EC" id="3.1.3.16"/>
    </reaction>
</comment>
<comment type="catalytic activity">
    <reaction>
        <text>O-phospho-L-threonyl-[protein] + H2O = L-threonyl-[protein] + phosphate</text>
        <dbReference type="Rhea" id="RHEA:47004"/>
        <dbReference type="Rhea" id="RHEA-COMP:11060"/>
        <dbReference type="Rhea" id="RHEA-COMP:11605"/>
        <dbReference type="ChEBI" id="CHEBI:15377"/>
        <dbReference type="ChEBI" id="CHEBI:30013"/>
        <dbReference type="ChEBI" id="CHEBI:43474"/>
        <dbReference type="ChEBI" id="CHEBI:61977"/>
        <dbReference type="EC" id="3.1.3.16"/>
    </reaction>
</comment>
<comment type="subunit">
    <text evidence="1">Component of the cleavage and polyadenylation factor (CPF) complex.</text>
</comment>
<comment type="subcellular location">
    <subcellularLocation>
        <location evidence="1">Nucleus</location>
    </subcellularLocation>
</comment>
<comment type="similarity">
    <text evidence="2">Belongs to the SSU72 phosphatase family.</text>
</comment>
<feature type="chain" id="PRO_0000255609" description="RNA polymerase II subunit A C-terminal domain phosphatase SSU72">
    <location>
        <begin position="1"/>
        <end position="255"/>
    </location>
</feature>
<organism>
    <name type="scientific">Gibberella zeae (strain ATCC MYA-4620 / CBS 123657 / FGSC 9075 / NRRL 31084 / PH-1)</name>
    <name type="common">Wheat head blight fungus</name>
    <name type="synonym">Fusarium graminearum</name>
    <dbReference type="NCBI Taxonomy" id="229533"/>
    <lineage>
        <taxon>Eukaryota</taxon>
        <taxon>Fungi</taxon>
        <taxon>Dikarya</taxon>
        <taxon>Ascomycota</taxon>
        <taxon>Pezizomycotina</taxon>
        <taxon>Sordariomycetes</taxon>
        <taxon>Hypocreomycetidae</taxon>
        <taxon>Hypocreales</taxon>
        <taxon>Nectriaceae</taxon>
        <taxon>Fusarium</taxon>
    </lineage>
</organism>
<reference key="1">
    <citation type="journal article" date="2007" name="Science">
        <title>The Fusarium graminearum genome reveals a link between localized polymorphism and pathogen specialization.</title>
        <authorList>
            <person name="Cuomo C.A."/>
            <person name="Gueldener U."/>
            <person name="Xu J.-R."/>
            <person name="Trail F."/>
            <person name="Turgeon B.G."/>
            <person name="Di Pietro A."/>
            <person name="Walton J.D."/>
            <person name="Ma L.-J."/>
            <person name="Baker S.E."/>
            <person name="Rep M."/>
            <person name="Adam G."/>
            <person name="Antoniw J."/>
            <person name="Baldwin T."/>
            <person name="Calvo S.E."/>
            <person name="Chang Y.-L."/>
            <person name="DeCaprio D."/>
            <person name="Gale L.R."/>
            <person name="Gnerre S."/>
            <person name="Goswami R.S."/>
            <person name="Hammond-Kosack K."/>
            <person name="Harris L.J."/>
            <person name="Hilburn K."/>
            <person name="Kennell J.C."/>
            <person name="Kroken S."/>
            <person name="Magnuson J.K."/>
            <person name="Mannhaupt G."/>
            <person name="Mauceli E.W."/>
            <person name="Mewes H.-W."/>
            <person name="Mitterbauer R."/>
            <person name="Muehlbauer G."/>
            <person name="Muensterkoetter M."/>
            <person name="Nelson D."/>
            <person name="O'Donnell K."/>
            <person name="Ouellet T."/>
            <person name="Qi W."/>
            <person name="Quesneville H."/>
            <person name="Roncero M.I.G."/>
            <person name="Seong K.-Y."/>
            <person name="Tetko I.V."/>
            <person name="Urban M."/>
            <person name="Waalwijk C."/>
            <person name="Ward T.J."/>
            <person name="Yao J."/>
            <person name="Birren B.W."/>
            <person name="Kistler H.C."/>
        </authorList>
    </citation>
    <scope>NUCLEOTIDE SEQUENCE [LARGE SCALE GENOMIC DNA]</scope>
    <source>
        <strain>ATCC MYA-4620 / CBS 123657 / FGSC 9075 / NRRL 31084 / PH-1</strain>
    </source>
</reference>
<reference key="2">
    <citation type="journal article" date="2010" name="Nature">
        <title>Comparative genomics reveals mobile pathogenicity chromosomes in Fusarium.</title>
        <authorList>
            <person name="Ma L.-J."/>
            <person name="van der Does H.C."/>
            <person name="Borkovich K.A."/>
            <person name="Coleman J.J."/>
            <person name="Daboussi M.-J."/>
            <person name="Di Pietro A."/>
            <person name="Dufresne M."/>
            <person name="Freitag M."/>
            <person name="Grabherr M."/>
            <person name="Henrissat B."/>
            <person name="Houterman P.M."/>
            <person name="Kang S."/>
            <person name="Shim W.-B."/>
            <person name="Woloshuk C."/>
            <person name="Xie X."/>
            <person name="Xu J.-R."/>
            <person name="Antoniw J."/>
            <person name="Baker S.E."/>
            <person name="Bluhm B.H."/>
            <person name="Breakspear A."/>
            <person name="Brown D.W."/>
            <person name="Butchko R.A.E."/>
            <person name="Chapman S."/>
            <person name="Coulson R."/>
            <person name="Coutinho P.M."/>
            <person name="Danchin E.G.J."/>
            <person name="Diener A."/>
            <person name="Gale L.R."/>
            <person name="Gardiner D.M."/>
            <person name="Goff S."/>
            <person name="Hammond-Kosack K.E."/>
            <person name="Hilburn K."/>
            <person name="Hua-Van A."/>
            <person name="Jonkers W."/>
            <person name="Kazan K."/>
            <person name="Kodira C.D."/>
            <person name="Koehrsen M."/>
            <person name="Kumar L."/>
            <person name="Lee Y.-H."/>
            <person name="Li L."/>
            <person name="Manners J.M."/>
            <person name="Miranda-Saavedra D."/>
            <person name="Mukherjee M."/>
            <person name="Park G."/>
            <person name="Park J."/>
            <person name="Park S.-Y."/>
            <person name="Proctor R.H."/>
            <person name="Regev A."/>
            <person name="Ruiz-Roldan M.C."/>
            <person name="Sain D."/>
            <person name="Sakthikumar S."/>
            <person name="Sykes S."/>
            <person name="Schwartz D.C."/>
            <person name="Turgeon B.G."/>
            <person name="Wapinski I."/>
            <person name="Yoder O."/>
            <person name="Young S."/>
            <person name="Zeng Q."/>
            <person name="Zhou S."/>
            <person name="Galagan J."/>
            <person name="Cuomo C.A."/>
            <person name="Kistler H.C."/>
            <person name="Rep M."/>
        </authorList>
    </citation>
    <scope>GENOME REANNOTATION</scope>
    <source>
        <strain>ATCC MYA-4620 / CBS 123657 / FGSC 9075 / NRRL 31084 / PH-1</strain>
    </source>
</reference>
<reference key="3">
    <citation type="journal article" date="2015" name="BMC Genomics">
        <title>The completed genome sequence of the pathogenic ascomycete fungus Fusarium graminearum.</title>
        <authorList>
            <person name="King R."/>
            <person name="Urban M."/>
            <person name="Hammond-Kosack M.C.U."/>
            <person name="Hassani-Pak K."/>
            <person name="Hammond-Kosack K.E."/>
        </authorList>
    </citation>
    <scope>NUCLEOTIDE SEQUENCE [LARGE SCALE GENOMIC DNA]</scope>
    <source>
        <strain>ATCC MYA-4620 / CBS 123657 / FGSC 9075 / NRRL 31084 / PH-1</strain>
    </source>
</reference>
<keyword id="KW-0378">Hydrolase</keyword>
<keyword id="KW-0507">mRNA processing</keyword>
<keyword id="KW-0539">Nucleus</keyword>
<keyword id="KW-0904">Protein phosphatase</keyword>
<keyword id="KW-1185">Reference proteome</keyword>